<reference key="1">
    <citation type="journal article" date="2006" name="Proc. Natl. Acad. Sci. U.S.A.">
        <title>Genome reduction in Leptospira borgpetersenii reflects limited transmission potential.</title>
        <authorList>
            <person name="Bulach D.M."/>
            <person name="Zuerner R.L."/>
            <person name="Wilson P."/>
            <person name="Seemann T."/>
            <person name="McGrath A."/>
            <person name="Cullen P.A."/>
            <person name="Davis J."/>
            <person name="Johnson M."/>
            <person name="Kuczek E."/>
            <person name="Alt D.P."/>
            <person name="Peterson-Burch B."/>
            <person name="Coppel R.L."/>
            <person name="Rood J.I."/>
            <person name="Davies J.K."/>
            <person name="Adler B."/>
        </authorList>
    </citation>
    <scope>NUCLEOTIDE SEQUENCE [LARGE SCALE GENOMIC DNA]</scope>
    <source>
        <strain>JB197</strain>
    </source>
</reference>
<proteinExistence type="inferred from homology"/>
<organism>
    <name type="scientific">Leptospira borgpetersenii serovar Hardjo-bovis (strain JB197)</name>
    <dbReference type="NCBI Taxonomy" id="355277"/>
    <lineage>
        <taxon>Bacteria</taxon>
        <taxon>Pseudomonadati</taxon>
        <taxon>Spirochaetota</taxon>
        <taxon>Spirochaetia</taxon>
        <taxon>Leptospirales</taxon>
        <taxon>Leptospiraceae</taxon>
        <taxon>Leptospira</taxon>
    </lineage>
</organism>
<comment type="similarity">
    <text evidence="1">Belongs to the UPF0102 family.</text>
</comment>
<evidence type="ECO:0000255" key="1">
    <source>
        <dbReference type="HAMAP-Rule" id="MF_00048"/>
    </source>
</evidence>
<feature type="chain" id="PRO_1000009229" description="UPF0102 protein LBJ_1427">
    <location>
        <begin position="1"/>
        <end position="116"/>
    </location>
</feature>
<gene>
    <name type="ordered locus">LBJ_1427</name>
</gene>
<name>Y1427_LEPBJ</name>
<dbReference type="EMBL" id="CP000350">
    <property type="protein sequence ID" value="ABJ76000.1"/>
    <property type="molecule type" value="Genomic_DNA"/>
</dbReference>
<dbReference type="RefSeq" id="WP_002728443.1">
    <property type="nucleotide sequence ID" value="NC_008510.1"/>
</dbReference>
<dbReference type="SMR" id="Q04SX0"/>
<dbReference type="KEGG" id="lbj:LBJ_1427"/>
<dbReference type="HOGENOM" id="CLU_115353_3_1_12"/>
<dbReference type="Proteomes" id="UP000000656">
    <property type="component" value="Chromosome 1"/>
</dbReference>
<dbReference type="GO" id="GO:0003676">
    <property type="term" value="F:nucleic acid binding"/>
    <property type="evidence" value="ECO:0007669"/>
    <property type="project" value="InterPro"/>
</dbReference>
<dbReference type="Gene3D" id="3.40.1350.10">
    <property type="match status" value="1"/>
</dbReference>
<dbReference type="HAMAP" id="MF_00048">
    <property type="entry name" value="UPF0102"/>
    <property type="match status" value="1"/>
</dbReference>
<dbReference type="InterPro" id="IPR011335">
    <property type="entry name" value="Restrct_endonuc-II-like"/>
</dbReference>
<dbReference type="InterPro" id="IPR011856">
    <property type="entry name" value="tRNA_endonuc-like_dom_sf"/>
</dbReference>
<dbReference type="InterPro" id="IPR003509">
    <property type="entry name" value="UPF0102_YraN-like"/>
</dbReference>
<dbReference type="NCBIfam" id="NF009157">
    <property type="entry name" value="PRK12497.4-3"/>
    <property type="match status" value="1"/>
</dbReference>
<dbReference type="PANTHER" id="PTHR34039">
    <property type="entry name" value="UPF0102 PROTEIN YRAN"/>
    <property type="match status" value="1"/>
</dbReference>
<dbReference type="PANTHER" id="PTHR34039:SF1">
    <property type="entry name" value="UPF0102 PROTEIN YRAN"/>
    <property type="match status" value="1"/>
</dbReference>
<dbReference type="Pfam" id="PF02021">
    <property type="entry name" value="UPF0102"/>
    <property type="match status" value="1"/>
</dbReference>
<dbReference type="SUPFAM" id="SSF52980">
    <property type="entry name" value="Restriction endonuclease-like"/>
    <property type="match status" value="1"/>
</dbReference>
<accession>Q04SX0</accession>
<sequence>MSRFKKIKGDEGESIASDFLISIGHEILKRNYRFLYCEIDIISIKEEVLYFSEVKFWKEFESFDPRFTFNFAKQTRMRKAASGFLSENLSLQNHFVSFCLVSINEKKGCEYYPDLF</sequence>
<protein>
    <recommendedName>
        <fullName evidence="1">UPF0102 protein LBJ_1427</fullName>
    </recommendedName>
</protein>